<evidence type="ECO:0000250" key="1">
    <source>
        <dbReference type="UniProtKB" id="P54287"/>
    </source>
</evidence>
<evidence type="ECO:0000250" key="2">
    <source>
        <dbReference type="UniProtKB" id="Q9MZL3"/>
    </source>
</evidence>
<evidence type="ECO:0000255" key="3">
    <source>
        <dbReference type="PROSITE-ProRule" id="PRU00192"/>
    </source>
</evidence>
<evidence type="ECO:0000256" key="4">
    <source>
        <dbReference type="SAM" id="MobiDB-lite"/>
    </source>
</evidence>
<evidence type="ECO:0000269" key="5">
    <source>
    </source>
</evidence>
<evidence type="ECO:0000269" key="6">
    <source>
    </source>
</evidence>
<evidence type="ECO:0000269" key="7">
    <source>
    </source>
</evidence>
<evidence type="ECO:0000269" key="8">
    <source>
    </source>
</evidence>
<evidence type="ECO:0000269" key="9">
    <source>
    </source>
</evidence>
<evidence type="ECO:0000303" key="10">
    <source>
    </source>
</evidence>
<evidence type="ECO:0000303" key="11">
    <source>
    </source>
</evidence>
<evidence type="ECO:0000303" key="12">
    <source ref="1"/>
</evidence>
<evidence type="ECO:0000305" key="13"/>
<evidence type="ECO:0007829" key="14">
    <source>
        <dbReference type="PDB" id="8E59"/>
    </source>
</evidence>
<evidence type="ECO:0007829" key="15">
    <source>
        <dbReference type="PDB" id="8WE6"/>
    </source>
</evidence>
<evidence type="ECO:0007829" key="16">
    <source>
        <dbReference type="PDB" id="8WE7"/>
    </source>
</evidence>
<evidence type="ECO:0007829" key="17">
    <source>
        <dbReference type="PDB" id="8WE8"/>
    </source>
</evidence>
<evidence type="ECO:0007829" key="18">
    <source>
        <dbReference type="PDB" id="8X93"/>
    </source>
</evidence>
<accession>P54284</accession>
<accession>A8K0Z4</accession>
<accession>B7Z4Q1</accession>
<accession>B7Z973</accession>
<accession>B7ZAK8</accession>
<accession>F5GZW7</accession>
<accession>F5H2P6</accession>
<accession>F8VSG3</accession>
<accession>Q13913</accession>
<comment type="function">
    <text evidence="1 2 9">Regulatory subunit of the voltage-gated calcium channel that gives rise to L-type calcium currents (PubMed:8119293). Increases CACNA1B peak calcium current and shifts the voltage dependencies of channel activation and inactivation (By similarity). Increases CACNA1C peak calcium current and shifts the voltage dependencies of channel activation and inactivation (By similarity).</text>
</comment>
<comment type="subunit">
    <text evidence="1 5 6 7 13">Component of a calcium channel complex consisting of a pore-forming alpha subunit (CACNA1C) and the ancillary subunits CACNB3 and CACNA2D1 (PubMed:29742403). The channel complex contains alpha, beta, gamma and delta subunits in a 1:1:1:1 ratio (Probable). Interacts with CACNA2D4 (PubMed:12181424). Interacts with FASLG (PubMed:19807924). Interacts with CBARP; prevents the interaction of CACNB3 with the alpha subunit CACNA1C thereby negatively regulating the activity of the corresponding calcium channel (By similarity).</text>
</comment>
<comment type="interaction">
    <interactant intactId="EBI-1184651">
        <id>P54284</id>
    </interactant>
    <interactant intactId="EBI-1038838">
        <id>Q13936</id>
        <label>CACNA1C</label>
    </interactant>
    <organismsDiffer>false</organismsDiffer>
    <experiments>8</experiments>
</comment>
<comment type="interaction">
    <interactant intactId="EBI-1184651">
        <id>P54284</id>
    </interactant>
    <interactant intactId="EBI-742887">
        <id>Q8TAP6</id>
        <label>CEP76</label>
    </interactant>
    <organismsDiffer>false</organismsDiffer>
    <experiments>3</experiments>
</comment>
<comment type="interaction">
    <interactant intactId="EBI-1184651">
        <id>P54284</id>
    </interactant>
    <interactant intactId="EBI-750511">
        <id>Q6FI81</id>
        <label>CIAPIN1</label>
    </interactant>
    <organismsDiffer>false</organismsDiffer>
    <experiments>6</experiments>
</comment>
<comment type="interaction">
    <interactant intactId="EBI-1184651">
        <id>P54284</id>
    </interactant>
    <interactant intactId="EBI-12155483">
        <id>Q9H1P6</id>
        <label>CIMIP1</label>
    </interactant>
    <organismsDiffer>false</organismsDiffer>
    <experiments>3</experiments>
</comment>
<comment type="interaction">
    <interactant intactId="EBI-1184651">
        <id>P54284</id>
    </interactant>
    <interactant intactId="EBI-10171902">
        <id>P56545-3</id>
        <label>CTBP2</label>
    </interactant>
    <organismsDiffer>false</organismsDiffer>
    <experiments>8</experiments>
</comment>
<comment type="interaction">
    <interactant intactId="EBI-1184651">
        <id>P54284</id>
    </interactant>
    <interactant intactId="EBI-744104">
        <id>P55040</id>
        <label>GEM</label>
    </interactant>
    <organismsDiffer>false</organismsDiffer>
    <experiments>8</experiments>
</comment>
<comment type="interaction">
    <interactant intactId="EBI-1184651">
        <id>P54284</id>
    </interactant>
    <interactant intactId="EBI-2864512">
        <id>P50221</id>
        <label>MEOX1</label>
    </interactant>
    <organismsDiffer>false</organismsDiffer>
    <experiments>3</experiments>
</comment>
<comment type="interaction">
    <interactant intactId="EBI-1184651">
        <id>P54284</id>
    </interactant>
    <interactant intactId="EBI-11522433">
        <id>Q5JR59-3</id>
        <label>MTUS2</label>
    </interactant>
    <organismsDiffer>false</organismsDiffer>
    <experiments>3</experiments>
</comment>
<comment type="interaction">
    <interactant intactId="EBI-1184651">
        <id>P54284</id>
    </interactant>
    <interactant intactId="EBI-373226">
        <id>Q15477</id>
        <label>SKIC2</label>
    </interactant>
    <organismsDiffer>false</organismsDiffer>
    <experiments>3</experiments>
</comment>
<comment type="subcellular location">
    <subcellularLocation>
        <location evidence="8">Cytoplasm</location>
    </subcellularLocation>
</comment>
<comment type="alternative products">
    <event type="alternative splicing"/>
    <isoform>
        <id>P54284-1</id>
        <name>1</name>
        <name>3A</name>
        <sequence type="displayed"/>
    </isoform>
    <isoform>
        <id>P54284-2</id>
        <name>2</name>
        <name>3B</name>
        <sequence type="described" ref="VSP_000634"/>
    </isoform>
    <isoform>
        <id>P54284-3</id>
        <name>3</name>
        <sequence type="described" ref="VSP_046708"/>
    </isoform>
    <isoform>
        <id>P54284-4</id>
        <name>4</name>
        <sequence type="described" ref="VSP_046709"/>
    </isoform>
    <isoform>
        <id>P54284-5</id>
        <name>5</name>
        <sequence type="described" ref="VSP_046710"/>
    </isoform>
</comment>
<comment type="tissue specificity">
    <text evidence="9">Expressed mostly in brain, colon and ovary.</text>
</comment>
<comment type="similarity">
    <text evidence="13">Belongs to the calcium channel beta subunit family.</text>
</comment>
<proteinExistence type="evidence at protein level"/>
<reference key="1">
    <citation type="submission" date="1993-12" db="EMBL/GenBank/DDBJ databases">
        <authorList>
            <person name="Murakami M."/>
            <person name="Klugbauer N."/>
            <person name="Flockerzi V."/>
        </authorList>
    </citation>
    <scope>NUCLEOTIDE SEQUENCE [MRNA] (ISOFORMS 1 AND 2)</scope>
</reference>
<reference key="2">
    <citation type="journal article" date="1995" name="Genomics">
        <title>The structures of the human calcium channel alpha 1 subunit (CACNL1A2) and beta subunit (CACNLB3) genes.</title>
        <authorList>
            <person name="Yamada Y."/>
            <person name="Masuda K."/>
            <person name="Li Q."/>
            <person name="Ihara Y."/>
            <person name="Kubota A."/>
            <person name="Miura T."/>
            <person name="Nakamura K."/>
            <person name="Fujii Y."/>
            <person name="Seino S."/>
            <person name="Seino Y."/>
        </authorList>
    </citation>
    <scope>NUCLEOTIDE SEQUENCE [GENOMIC DNA]</scope>
</reference>
<reference key="3">
    <citation type="submission" date="1994-02" db="EMBL/GenBank/DDBJ databases">
        <authorList>
            <person name="Furneaux H.M."/>
        </authorList>
    </citation>
    <scope>NUCLEOTIDE SEQUENCE [MRNA] (ISOFORM 1)</scope>
    <source>
        <tissue>Fetal brain</tissue>
    </source>
</reference>
<reference key="4">
    <citation type="journal article" date="1994" name="Eur. J. Biochem.">
        <title>Cloning, chromosomal location and functional expression of the human voltage-dependent calcium-channel beta 3 subunit.</title>
        <authorList>
            <person name="Collin T."/>
            <person name="Lory P."/>
            <person name="Taviaux S."/>
            <person name="Courtieu C."/>
            <person name="Guilbault P."/>
            <person name="Berta P."/>
            <person name="Nargeot J."/>
        </authorList>
    </citation>
    <scope>NUCLEOTIDE SEQUENCE [MRNA] (ISOFORM 1)</scope>
    <scope>FUNCTION</scope>
    <scope>TISSUE SPECIFICITY</scope>
</reference>
<reference key="5">
    <citation type="journal article" date="2004" name="Nat. Genet.">
        <title>Complete sequencing and characterization of 21,243 full-length human cDNAs.</title>
        <authorList>
            <person name="Ota T."/>
            <person name="Suzuki Y."/>
            <person name="Nishikawa T."/>
            <person name="Otsuki T."/>
            <person name="Sugiyama T."/>
            <person name="Irie R."/>
            <person name="Wakamatsu A."/>
            <person name="Hayashi K."/>
            <person name="Sato H."/>
            <person name="Nagai K."/>
            <person name="Kimura K."/>
            <person name="Makita H."/>
            <person name="Sekine M."/>
            <person name="Obayashi M."/>
            <person name="Nishi T."/>
            <person name="Shibahara T."/>
            <person name="Tanaka T."/>
            <person name="Ishii S."/>
            <person name="Yamamoto J."/>
            <person name="Saito K."/>
            <person name="Kawai Y."/>
            <person name="Isono Y."/>
            <person name="Nakamura Y."/>
            <person name="Nagahari K."/>
            <person name="Murakami K."/>
            <person name="Yasuda T."/>
            <person name="Iwayanagi T."/>
            <person name="Wagatsuma M."/>
            <person name="Shiratori A."/>
            <person name="Sudo H."/>
            <person name="Hosoiri T."/>
            <person name="Kaku Y."/>
            <person name="Kodaira H."/>
            <person name="Kondo H."/>
            <person name="Sugawara M."/>
            <person name="Takahashi M."/>
            <person name="Kanda K."/>
            <person name="Yokoi T."/>
            <person name="Furuya T."/>
            <person name="Kikkawa E."/>
            <person name="Omura Y."/>
            <person name="Abe K."/>
            <person name="Kamihara K."/>
            <person name="Katsuta N."/>
            <person name="Sato K."/>
            <person name="Tanikawa M."/>
            <person name="Yamazaki M."/>
            <person name="Ninomiya K."/>
            <person name="Ishibashi T."/>
            <person name="Yamashita H."/>
            <person name="Murakawa K."/>
            <person name="Fujimori K."/>
            <person name="Tanai H."/>
            <person name="Kimata M."/>
            <person name="Watanabe M."/>
            <person name="Hiraoka S."/>
            <person name="Chiba Y."/>
            <person name="Ishida S."/>
            <person name="Ono Y."/>
            <person name="Takiguchi S."/>
            <person name="Watanabe S."/>
            <person name="Yosida M."/>
            <person name="Hotuta T."/>
            <person name="Kusano J."/>
            <person name="Kanehori K."/>
            <person name="Takahashi-Fujii A."/>
            <person name="Hara H."/>
            <person name="Tanase T.-O."/>
            <person name="Nomura Y."/>
            <person name="Togiya S."/>
            <person name="Komai F."/>
            <person name="Hara R."/>
            <person name="Takeuchi K."/>
            <person name="Arita M."/>
            <person name="Imose N."/>
            <person name="Musashino K."/>
            <person name="Yuuki H."/>
            <person name="Oshima A."/>
            <person name="Sasaki N."/>
            <person name="Aotsuka S."/>
            <person name="Yoshikawa Y."/>
            <person name="Matsunawa H."/>
            <person name="Ichihara T."/>
            <person name="Shiohata N."/>
            <person name="Sano S."/>
            <person name="Moriya S."/>
            <person name="Momiyama H."/>
            <person name="Satoh N."/>
            <person name="Takami S."/>
            <person name="Terashima Y."/>
            <person name="Suzuki O."/>
            <person name="Nakagawa S."/>
            <person name="Senoh A."/>
            <person name="Mizoguchi H."/>
            <person name="Goto Y."/>
            <person name="Shimizu F."/>
            <person name="Wakebe H."/>
            <person name="Hishigaki H."/>
            <person name="Watanabe T."/>
            <person name="Sugiyama A."/>
            <person name="Takemoto M."/>
            <person name="Kawakami B."/>
            <person name="Yamazaki M."/>
            <person name="Watanabe K."/>
            <person name="Kumagai A."/>
            <person name="Itakura S."/>
            <person name="Fukuzumi Y."/>
            <person name="Fujimori Y."/>
            <person name="Komiyama M."/>
            <person name="Tashiro H."/>
            <person name="Tanigami A."/>
            <person name="Fujiwara T."/>
            <person name="Ono T."/>
            <person name="Yamada K."/>
            <person name="Fujii Y."/>
            <person name="Ozaki K."/>
            <person name="Hirao M."/>
            <person name="Ohmori Y."/>
            <person name="Kawabata A."/>
            <person name="Hikiji T."/>
            <person name="Kobatake N."/>
            <person name="Inagaki H."/>
            <person name="Ikema Y."/>
            <person name="Okamoto S."/>
            <person name="Okitani R."/>
            <person name="Kawakami T."/>
            <person name="Noguchi S."/>
            <person name="Itoh T."/>
            <person name="Shigeta K."/>
            <person name="Senba T."/>
            <person name="Matsumura K."/>
            <person name="Nakajima Y."/>
            <person name="Mizuno T."/>
            <person name="Morinaga M."/>
            <person name="Sasaki M."/>
            <person name="Togashi T."/>
            <person name="Oyama M."/>
            <person name="Hata H."/>
            <person name="Watanabe M."/>
            <person name="Komatsu T."/>
            <person name="Mizushima-Sugano J."/>
            <person name="Satoh T."/>
            <person name="Shirai Y."/>
            <person name="Takahashi Y."/>
            <person name="Nakagawa K."/>
            <person name="Okumura K."/>
            <person name="Nagase T."/>
            <person name="Nomura N."/>
            <person name="Kikuchi H."/>
            <person name="Masuho Y."/>
            <person name="Yamashita R."/>
            <person name="Nakai K."/>
            <person name="Yada T."/>
            <person name="Nakamura Y."/>
            <person name="Ohara O."/>
            <person name="Isogai T."/>
            <person name="Sugano S."/>
        </authorList>
    </citation>
    <scope>NUCLEOTIDE SEQUENCE [LARGE SCALE MRNA] (ISOFORMS 1; 3 AND 4)</scope>
    <source>
        <tissue>Brain</tissue>
        <tissue>Small intestine</tissue>
        <tissue>Uterus</tissue>
    </source>
</reference>
<reference key="6">
    <citation type="journal article" date="2006" name="Nature">
        <title>The finished DNA sequence of human chromosome 12.</title>
        <authorList>
            <person name="Scherer S.E."/>
            <person name="Muzny D.M."/>
            <person name="Buhay C.J."/>
            <person name="Chen R."/>
            <person name="Cree A."/>
            <person name="Ding Y."/>
            <person name="Dugan-Rocha S."/>
            <person name="Gill R."/>
            <person name="Gunaratne P."/>
            <person name="Harris R.A."/>
            <person name="Hawes A.C."/>
            <person name="Hernandez J."/>
            <person name="Hodgson A.V."/>
            <person name="Hume J."/>
            <person name="Jackson A."/>
            <person name="Khan Z.M."/>
            <person name="Kovar-Smith C."/>
            <person name="Lewis L.R."/>
            <person name="Lozado R.J."/>
            <person name="Metzker M.L."/>
            <person name="Milosavljevic A."/>
            <person name="Miner G.R."/>
            <person name="Montgomery K.T."/>
            <person name="Morgan M.B."/>
            <person name="Nazareth L.V."/>
            <person name="Scott G."/>
            <person name="Sodergren E."/>
            <person name="Song X.-Z."/>
            <person name="Steffen D."/>
            <person name="Lovering R.C."/>
            <person name="Wheeler D.A."/>
            <person name="Worley K.C."/>
            <person name="Yuan Y."/>
            <person name="Zhang Z."/>
            <person name="Adams C.Q."/>
            <person name="Ansari-Lari M.A."/>
            <person name="Ayele M."/>
            <person name="Brown M.J."/>
            <person name="Chen G."/>
            <person name="Chen Z."/>
            <person name="Clerc-Blankenburg K.P."/>
            <person name="Davis C."/>
            <person name="Delgado O."/>
            <person name="Dinh H.H."/>
            <person name="Draper H."/>
            <person name="Gonzalez-Garay M.L."/>
            <person name="Havlak P."/>
            <person name="Jackson L.R."/>
            <person name="Jacob L.S."/>
            <person name="Kelly S.H."/>
            <person name="Li L."/>
            <person name="Li Z."/>
            <person name="Liu J."/>
            <person name="Liu W."/>
            <person name="Lu J."/>
            <person name="Maheshwari M."/>
            <person name="Nguyen B.-V."/>
            <person name="Okwuonu G.O."/>
            <person name="Pasternak S."/>
            <person name="Perez L.M."/>
            <person name="Plopper F.J.H."/>
            <person name="Santibanez J."/>
            <person name="Shen H."/>
            <person name="Tabor P.E."/>
            <person name="Verduzco D."/>
            <person name="Waldron L."/>
            <person name="Wang Q."/>
            <person name="Williams G.A."/>
            <person name="Zhang J."/>
            <person name="Zhou J."/>
            <person name="Allen C.C."/>
            <person name="Amin A.G."/>
            <person name="Anyalebechi V."/>
            <person name="Bailey M."/>
            <person name="Barbaria J.A."/>
            <person name="Bimage K.E."/>
            <person name="Bryant N.P."/>
            <person name="Burch P.E."/>
            <person name="Burkett C.E."/>
            <person name="Burrell K.L."/>
            <person name="Calderon E."/>
            <person name="Cardenas V."/>
            <person name="Carter K."/>
            <person name="Casias K."/>
            <person name="Cavazos I."/>
            <person name="Cavazos S.R."/>
            <person name="Ceasar H."/>
            <person name="Chacko J."/>
            <person name="Chan S.N."/>
            <person name="Chavez D."/>
            <person name="Christopoulos C."/>
            <person name="Chu J."/>
            <person name="Cockrell R."/>
            <person name="Cox C.D."/>
            <person name="Dang M."/>
            <person name="Dathorne S.R."/>
            <person name="David R."/>
            <person name="Davis C.M."/>
            <person name="Davy-Carroll L."/>
            <person name="Deshazo D.R."/>
            <person name="Donlin J.E."/>
            <person name="D'Souza L."/>
            <person name="Eaves K.A."/>
            <person name="Egan A."/>
            <person name="Emery-Cohen A.J."/>
            <person name="Escotto M."/>
            <person name="Flagg N."/>
            <person name="Forbes L.D."/>
            <person name="Gabisi A.M."/>
            <person name="Garza M."/>
            <person name="Hamilton C."/>
            <person name="Henderson N."/>
            <person name="Hernandez O."/>
            <person name="Hines S."/>
            <person name="Hogues M.E."/>
            <person name="Huang M."/>
            <person name="Idlebird D.G."/>
            <person name="Johnson R."/>
            <person name="Jolivet A."/>
            <person name="Jones S."/>
            <person name="Kagan R."/>
            <person name="King L.M."/>
            <person name="Leal B."/>
            <person name="Lebow H."/>
            <person name="Lee S."/>
            <person name="LeVan J.M."/>
            <person name="Lewis L.C."/>
            <person name="London P."/>
            <person name="Lorensuhewa L.M."/>
            <person name="Loulseged H."/>
            <person name="Lovett D.A."/>
            <person name="Lucier A."/>
            <person name="Lucier R.L."/>
            <person name="Ma J."/>
            <person name="Madu R.C."/>
            <person name="Mapua P."/>
            <person name="Martindale A.D."/>
            <person name="Martinez E."/>
            <person name="Massey E."/>
            <person name="Mawhiney S."/>
            <person name="Meador M.G."/>
            <person name="Mendez S."/>
            <person name="Mercado C."/>
            <person name="Mercado I.C."/>
            <person name="Merritt C.E."/>
            <person name="Miner Z.L."/>
            <person name="Minja E."/>
            <person name="Mitchell T."/>
            <person name="Mohabbat F."/>
            <person name="Mohabbat K."/>
            <person name="Montgomery B."/>
            <person name="Moore N."/>
            <person name="Morris S."/>
            <person name="Munidasa M."/>
            <person name="Ngo R.N."/>
            <person name="Nguyen N.B."/>
            <person name="Nickerson E."/>
            <person name="Nwaokelemeh O.O."/>
            <person name="Nwokenkwo S."/>
            <person name="Obregon M."/>
            <person name="Oguh M."/>
            <person name="Oragunye N."/>
            <person name="Oviedo R.J."/>
            <person name="Parish B.J."/>
            <person name="Parker D.N."/>
            <person name="Parrish J."/>
            <person name="Parks K.L."/>
            <person name="Paul H.A."/>
            <person name="Payton B.A."/>
            <person name="Perez A."/>
            <person name="Perrin W."/>
            <person name="Pickens A."/>
            <person name="Primus E.L."/>
            <person name="Pu L.-L."/>
            <person name="Puazo M."/>
            <person name="Quiles M.M."/>
            <person name="Quiroz J.B."/>
            <person name="Rabata D."/>
            <person name="Reeves K."/>
            <person name="Ruiz S.J."/>
            <person name="Shao H."/>
            <person name="Sisson I."/>
            <person name="Sonaike T."/>
            <person name="Sorelle R.P."/>
            <person name="Sutton A.E."/>
            <person name="Svatek A.F."/>
            <person name="Svetz L.A."/>
            <person name="Tamerisa K.S."/>
            <person name="Taylor T.R."/>
            <person name="Teague B."/>
            <person name="Thomas N."/>
            <person name="Thorn R.D."/>
            <person name="Trejos Z.Y."/>
            <person name="Trevino B.K."/>
            <person name="Ukegbu O.N."/>
            <person name="Urban J.B."/>
            <person name="Vasquez L.I."/>
            <person name="Vera V.A."/>
            <person name="Villasana D.M."/>
            <person name="Wang L."/>
            <person name="Ward-Moore S."/>
            <person name="Warren J.T."/>
            <person name="Wei X."/>
            <person name="White F."/>
            <person name="Williamson A.L."/>
            <person name="Wleczyk R."/>
            <person name="Wooden H.S."/>
            <person name="Wooden S.H."/>
            <person name="Yen J."/>
            <person name="Yoon L."/>
            <person name="Yoon V."/>
            <person name="Zorrilla S.E."/>
            <person name="Nelson D."/>
            <person name="Kucherlapati R."/>
            <person name="Weinstock G."/>
            <person name="Gibbs R.A."/>
        </authorList>
    </citation>
    <scope>NUCLEOTIDE SEQUENCE [LARGE SCALE GENOMIC DNA]</scope>
</reference>
<reference key="7">
    <citation type="submission" date="2005-07" db="EMBL/GenBank/DDBJ databases">
        <authorList>
            <person name="Mural R.J."/>
            <person name="Istrail S."/>
            <person name="Sutton G.G."/>
            <person name="Florea L."/>
            <person name="Halpern A.L."/>
            <person name="Mobarry C.M."/>
            <person name="Lippert R."/>
            <person name="Walenz B."/>
            <person name="Shatkay H."/>
            <person name="Dew I."/>
            <person name="Miller J.R."/>
            <person name="Flanigan M.J."/>
            <person name="Edwards N.J."/>
            <person name="Bolanos R."/>
            <person name="Fasulo D."/>
            <person name="Halldorsson B.V."/>
            <person name="Hannenhalli S."/>
            <person name="Turner R."/>
            <person name="Yooseph S."/>
            <person name="Lu F."/>
            <person name="Nusskern D.R."/>
            <person name="Shue B.C."/>
            <person name="Zheng X.H."/>
            <person name="Zhong F."/>
            <person name="Delcher A.L."/>
            <person name="Huson D.H."/>
            <person name="Kravitz S.A."/>
            <person name="Mouchard L."/>
            <person name="Reinert K."/>
            <person name="Remington K.A."/>
            <person name="Clark A.G."/>
            <person name="Waterman M.S."/>
            <person name="Eichler E.E."/>
            <person name="Adams M.D."/>
            <person name="Hunkapiller M.W."/>
            <person name="Myers E.W."/>
            <person name="Venter J.C."/>
        </authorList>
    </citation>
    <scope>NUCLEOTIDE SEQUENCE [LARGE SCALE GENOMIC DNA]</scope>
</reference>
<reference key="8">
    <citation type="journal article" date="2004" name="Genome Res.">
        <title>The status, quality, and expansion of the NIH full-length cDNA project: the Mammalian Gene Collection (MGC).</title>
        <authorList>
            <consortium name="The MGC Project Team"/>
        </authorList>
    </citation>
    <scope>NUCLEOTIDE SEQUENCE [LARGE SCALE MRNA] (ISOFORM 1)</scope>
    <source>
        <tissue>Brain</tissue>
    </source>
</reference>
<reference key="9">
    <citation type="journal article" date="2002" name="Mol. Pharmacol.">
        <title>Molecular cloning and characterization of the human voltage-gated calcium channel alpha(2)delta-4 subunit.</title>
        <authorList>
            <person name="Qin N."/>
            <person name="Yagel S."/>
            <person name="Momplaisir M.-L."/>
            <person name="Codd E.E."/>
            <person name="D'Andrea M.R."/>
        </authorList>
    </citation>
    <scope>INTERACTION WITH CACNA2D4</scope>
    <scope>IDENTIFICATION IN A COMPLEX WITH CACNA1C</scope>
</reference>
<reference key="10">
    <citation type="journal article" date="2009" name="BMC Immunol.">
        <title>Identification of SH3 domain interaction partners of human FasL (CD178) by phage display screening.</title>
        <authorList>
            <person name="Voss M."/>
            <person name="Lettau M."/>
            <person name="Janssen O."/>
        </authorList>
    </citation>
    <scope>INTERACTION WITH FASLG</scope>
</reference>
<reference key="11">
    <citation type="journal article" date="2018" name="Biophys. J.">
        <title>Alternative Splicing at N Terminus and Domain I Modulates CaV1.2 Inactivation and Surface Expression.</title>
        <authorList>
            <person name="Bartels P."/>
            <person name="Yu D."/>
            <person name="Huang H."/>
            <person name="Hu Z."/>
            <person name="Herzig S."/>
            <person name="Soong T.W."/>
        </authorList>
    </citation>
    <scope>INTERACTION WITH CACNA1C</scope>
    <scope>SUBUNIT</scope>
</reference>
<reference key="12">
    <citation type="journal article" date="2021" name="Nature">
        <title>Structure of human Cav2.2 channel blocked by the painkiller ziconotide.</title>
        <authorList>
            <person name="Gao S."/>
            <person name="Yao X."/>
            <person name="Yan N."/>
        </authorList>
    </citation>
    <scope>STRUCTURE BY ELECTRON MICROSCOPY (3.0 ANGSTROMS) OF 38-361 IN COMPLEX WITH HUMAN CAV2.2/CACNA1B AND ALPHA2DELTA-1 SUBUNIT IN PRESENCE AND ABSENCE OF THE OMEGA-CONOTOXIN MVIIA</scope>
    <scope>DISULFIDE BONDS</scope>
    <scope>SUBCELLULAR LOCATION</scope>
</reference>
<gene>
    <name type="primary">CACNB3</name>
    <name evidence="11" type="synonym">CACNLB3</name>
</gene>
<dbReference type="EMBL" id="X76555">
    <property type="protein sequence ID" value="CAA54055.1"/>
    <property type="molecule type" value="mRNA"/>
</dbReference>
<dbReference type="EMBL" id="X76556">
    <property type="protein sequence ID" value="CAA54056.1"/>
    <property type="molecule type" value="mRNA"/>
</dbReference>
<dbReference type="EMBL" id="D43704">
    <property type="protein sequence ID" value="BAA07803.1"/>
    <property type="molecule type" value="Genomic_DNA"/>
</dbReference>
<dbReference type="EMBL" id="U07139">
    <property type="protein sequence ID" value="AAA95958.1"/>
    <property type="molecule type" value="mRNA"/>
</dbReference>
<dbReference type="EMBL" id="L27584">
    <property type="protein sequence ID" value="AAA19799.1"/>
    <property type="molecule type" value="mRNA"/>
</dbReference>
<dbReference type="EMBL" id="AK289709">
    <property type="protein sequence ID" value="BAF82398.1"/>
    <property type="molecule type" value="mRNA"/>
</dbReference>
<dbReference type="EMBL" id="AK297639">
    <property type="protein sequence ID" value="BAH12637.1"/>
    <property type="molecule type" value="mRNA"/>
</dbReference>
<dbReference type="EMBL" id="AK304537">
    <property type="protein sequence ID" value="BAH14209.1"/>
    <property type="molecule type" value="mRNA"/>
</dbReference>
<dbReference type="EMBL" id="AK316323">
    <property type="protein sequence ID" value="BAH14694.1"/>
    <property type="molecule type" value="mRNA"/>
</dbReference>
<dbReference type="EMBL" id="AC117498">
    <property type="status" value="NOT_ANNOTATED_CDS"/>
    <property type="molecule type" value="Genomic_DNA"/>
</dbReference>
<dbReference type="EMBL" id="CH471111">
    <property type="protein sequence ID" value="EAW58008.1"/>
    <property type="molecule type" value="Genomic_DNA"/>
</dbReference>
<dbReference type="EMBL" id="BC041811">
    <property type="protein sequence ID" value="AAH41811.1"/>
    <property type="molecule type" value="mRNA"/>
</dbReference>
<dbReference type="CCDS" id="CCDS55821.1">
    <molecule id="P54284-3"/>
</dbReference>
<dbReference type="CCDS" id="CCDS55822.1">
    <molecule id="P54284-4"/>
</dbReference>
<dbReference type="CCDS" id="CCDS55823.1">
    <molecule id="P54284-5"/>
</dbReference>
<dbReference type="CCDS" id="CCDS8769.1">
    <molecule id="P54284-1"/>
</dbReference>
<dbReference type="PIR" id="S39315">
    <property type="entry name" value="S39315"/>
</dbReference>
<dbReference type="PIR" id="S39316">
    <property type="entry name" value="S39316"/>
</dbReference>
<dbReference type="PIR" id="S41211">
    <property type="entry name" value="S41211"/>
</dbReference>
<dbReference type="RefSeq" id="NP_000716.2">
    <molecule id="P54284-1"/>
    <property type="nucleotide sequence ID" value="NM_000725.3"/>
</dbReference>
<dbReference type="RefSeq" id="NP_001193844.1">
    <molecule id="P54284-5"/>
    <property type="nucleotide sequence ID" value="NM_001206915.2"/>
</dbReference>
<dbReference type="RefSeq" id="NP_001193845.1">
    <molecule id="P54284-4"/>
    <property type="nucleotide sequence ID" value="NM_001206916.2"/>
</dbReference>
<dbReference type="RefSeq" id="NP_001193846.1">
    <molecule id="P54284-3"/>
    <property type="nucleotide sequence ID" value="NM_001206917.2"/>
</dbReference>
<dbReference type="RefSeq" id="XP_047285481.1">
    <molecule id="P54284-1"/>
    <property type="nucleotide sequence ID" value="XM_047429525.1"/>
</dbReference>
<dbReference type="RefSeq" id="XP_054229164.1">
    <molecule id="P54284-1"/>
    <property type="nucleotide sequence ID" value="XM_054373189.1"/>
</dbReference>
<dbReference type="PDB" id="7MIX">
    <property type="method" value="EM"/>
    <property type="resolution" value="3.00 A"/>
    <property type="chains" value="C=1-484"/>
</dbReference>
<dbReference type="PDB" id="7MIY">
    <property type="method" value="EM"/>
    <property type="resolution" value="3.10 A"/>
    <property type="chains" value="C=1-484"/>
</dbReference>
<dbReference type="PDB" id="7UHF">
    <property type="method" value="EM"/>
    <property type="resolution" value="3.10 A"/>
    <property type="chains" value="C=1-484"/>
</dbReference>
<dbReference type="PDB" id="7UHG">
    <property type="method" value="EM"/>
    <property type="resolution" value="3.00 A"/>
    <property type="chains" value="C=1-484"/>
</dbReference>
<dbReference type="PDB" id="8E59">
    <property type="method" value="EM"/>
    <property type="resolution" value="3.10 A"/>
    <property type="chains" value="C=1-484"/>
</dbReference>
<dbReference type="PDB" id="8E5A">
    <property type="method" value="EM"/>
    <property type="resolution" value="3.30 A"/>
    <property type="chains" value="C=1-484"/>
</dbReference>
<dbReference type="PDB" id="8E5B">
    <property type="method" value="EM"/>
    <property type="resolution" value="3.30 A"/>
    <property type="chains" value="C=1-484"/>
</dbReference>
<dbReference type="PDB" id="8EPL">
    <property type="method" value="EM"/>
    <property type="resolution" value="3.10 A"/>
    <property type="chains" value="B=1-484"/>
</dbReference>
<dbReference type="PDB" id="8FHS">
    <property type="method" value="EM"/>
    <property type="resolution" value="3.30 A"/>
    <property type="chains" value="C=1-484"/>
</dbReference>
<dbReference type="PDB" id="8WE6">
    <property type="method" value="EM"/>
    <property type="resolution" value="2.90 A"/>
    <property type="chains" value="C=1-484"/>
</dbReference>
<dbReference type="PDB" id="8WE7">
    <property type="method" value="EM"/>
    <property type="resolution" value="3.20 A"/>
    <property type="chains" value="C=1-484"/>
</dbReference>
<dbReference type="PDB" id="8WE8">
    <property type="method" value="EM"/>
    <property type="resolution" value="2.90 A"/>
    <property type="chains" value="C=1-484"/>
</dbReference>
<dbReference type="PDB" id="8WE9">
    <property type="method" value="EM"/>
    <property type="resolution" value="3.00 A"/>
    <property type="chains" value="C=1-484"/>
</dbReference>
<dbReference type="PDB" id="8X90">
    <property type="method" value="EM"/>
    <property type="resolution" value="2.95 A"/>
    <property type="chains" value="C=1-484"/>
</dbReference>
<dbReference type="PDB" id="8X91">
    <property type="method" value="EM"/>
    <property type="resolution" value="3.11 A"/>
    <property type="chains" value="C=1-484"/>
</dbReference>
<dbReference type="PDB" id="8X93">
    <property type="method" value="EM"/>
    <property type="resolution" value="2.92 A"/>
    <property type="chains" value="C=1-484"/>
</dbReference>
<dbReference type="PDBsum" id="7MIX"/>
<dbReference type="PDBsum" id="7MIY"/>
<dbReference type="PDBsum" id="7UHF"/>
<dbReference type="PDBsum" id="7UHG"/>
<dbReference type="PDBsum" id="8E59"/>
<dbReference type="PDBsum" id="8E5A"/>
<dbReference type="PDBsum" id="8E5B"/>
<dbReference type="PDBsum" id="8EPL"/>
<dbReference type="PDBsum" id="8FHS"/>
<dbReference type="PDBsum" id="8WE6"/>
<dbReference type="PDBsum" id="8WE7"/>
<dbReference type="PDBsum" id="8WE8"/>
<dbReference type="PDBsum" id="8WE9"/>
<dbReference type="PDBsum" id="8X90"/>
<dbReference type="PDBsum" id="8X91"/>
<dbReference type="PDBsum" id="8X93"/>
<dbReference type="EMDB" id="EMD-23867"/>
<dbReference type="EMDB" id="EMD-23868"/>
<dbReference type="EMDB" id="EMD-26513"/>
<dbReference type="EMDB" id="EMD-26514"/>
<dbReference type="EMDB" id="EMD-27907"/>
<dbReference type="EMDB" id="EMD-27908"/>
<dbReference type="EMDB" id="EMD-27909"/>
<dbReference type="EMDB" id="EMD-28529"/>
<dbReference type="EMDB" id="EMD-29102"/>
<dbReference type="EMDB" id="EMD-37472"/>
<dbReference type="EMDB" id="EMD-37473"/>
<dbReference type="EMDB" id="EMD-37474"/>
<dbReference type="EMDB" id="EMD-37475"/>
<dbReference type="EMDB" id="EMD-38158"/>
<dbReference type="EMDB" id="EMD-38159"/>
<dbReference type="EMDB" id="EMD-38160"/>
<dbReference type="SMR" id="P54284"/>
<dbReference type="BioGRID" id="107238">
    <property type="interactions" value="30"/>
</dbReference>
<dbReference type="ComplexPortal" id="CPX-8725">
    <property type="entry name" value="Cav1.1 voltage-gated calcium channel complex, CACNA2D1-CACNB3-CACNG1 variant"/>
</dbReference>
<dbReference type="ComplexPortal" id="CPX-8742">
    <property type="entry name" value="Cav1.1 voltage-gated calcium channel complex, CACNA2D2-CACNB3-CACNG1 variant"/>
</dbReference>
<dbReference type="ComplexPortal" id="CPX-8764">
    <property type="entry name" value="Cav1.1 voltage-gated calcium channel complex, CACNA2D3-CACNB3-CACNG1 variant"/>
</dbReference>
<dbReference type="ComplexPortal" id="CPX-8772">
    <property type="entry name" value="Cav1.1 voltage-gated calcium channel complex, CACNA2D4-CACNB3-CACNG1 variant"/>
</dbReference>
<dbReference type="ComplexPortal" id="CPX-8861">
    <property type="entry name" value="Cav1.2 voltage-gated calcium channel complex, CACNA2D1-CACNB3 variant"/>
</dbReference>
<dbReference type="ComplexPortal" id="CPX-8866">
    <property type="entry name" value="Cav1.2 voltage-gated calcium channel complex, CACNA2D2-CACNB3 variant"/>
</dbReference>
<dbReference type="ComplexPortal" id="CPX-8870">
    <property type="entry name" value="Cav1.2 voltage-gated calcium channel complex, CACNA2D3-CACNB3 variant"/>
</dbReference>
<dbReference type="ComplexPortal" id="CPX-8875">
    <property type="entry name" value="Cav1.2 voltage-gated calcium channel complex, CACNA2D4-CACNB3 variant"/>
</dbReference>
<dbReference type="CORUM" id="P54284"/>
<dbReference type="DIP" id="DIP-39138N"/>
<dbReference type="FunCoup" id="P54284">
    <property type="interactions" value="671"/>
</dbReference>
<dbReference type="IntAct" id="P54284">
    <property type="interactions" value="27"/>
</dbReference>
<dbReference type="STRING" id="9606.ENSP00000301050"/>
<dbReference type="BindingDB" id="P54284"/>
<dbReference type="ChEMBL" id="CHEMBL3351206"/>
<dbReference type="DrugBank" id="DB01118">
    <property type="generic name" value="Amiodarone"/>
</dbReference>
<dbReference type="DrugBank" id="DB09231">
    <property type="generic name" value="Benidipine"/>
</dbReference>
<dbReference type="DrugBank" id="DB13746">
    <property type="generic name" value="Bioallethrin"/>
</dbReference>
<dbReference type="DrugBank" id="DB11148">
    <property type="generic name" value="Butamben"/>
</dbReference>
<dbReference type="DrugBank" id="DB11093">
    <property type="generic name" value="Calcium citrate"/>
</dbReference>
<dbReference type="DrugBank" id="DB11348">
    <property type="generic name" value="Calcium Phosphate"/>
</dbReference>
<dbReference type="DrugBank" id="DB14481">
    <property type="generic name" value="Calcium phosphate dihydrate"/>
</dbReference>
<dbReference type="DrugBank" id="DB09232">
    <property type="generic name" value="Cilnidipine"/>
</dbReference>
<dbReference type="DrugBank" id="DB04855">
    <property type="generic name" value="Dronedarone"/>
</dbReference>
<dbReference type="DrugBank" id="DB06751">
    <property type="generic name" value="Drotaverine"/>
</dbReference>
<dbReference type="DrugBank" id="DB09235">
    <property type="generic name" value="Efonidipine"/>
</dbReference>
<dbReference type="DrugBank" id="DB00228">
    <property type="generic name" value="Enflurane"/>
</dbReference>
<dbReference type="DrugBank" id="DB00153">
    <property type="generic name" value="Ergocalciferol"/>
</dbReference>
<dbReference type="DrugBank" id="DB13961">
    <property type="generic name" value="Fish oil"/>
</dbReference>
<dbReference type="DrugBank" id="DB09236">
    <property type="generic name" value="Lacidipine"/>
</dbReference>
<dbReference type="DrugBank" id="DB00825">
    <property type="generic name" value="Levomenthol"/>
</dbReference>
<dbReference type="DrugBank" id="DB00653">
    <property type="generic name" value="Magnesium sulfate"/>
</dbReference>
<dbReference type="DrugBank" id="DB09238">
    <property type="generic name" value="Manidipine"/>
</dbReference>
<dbReference type="DrugBank" id="DB01388">
    <property type="generic name" value="Mibefradil"/>
</dbReference>
<dbReference type="DrugBank" id="DB01110">
    <property type="generic name" value="Miconazole"/>
</dbReference>
<dbReference type="DrugBank" id="DB00622">
    <property type="generic name" value="Nicardipine"/>
</dbReference>
<dbReference type="DrugBank" id="DB06712">
    <property type="generic name" value="Nilvadipine"/>
</dbReference>
<dbReference type="DrugBank" id="DB00393">
    <property type="generic name" value="Nimodipine"/>
</dbReference>
<dbReference type="DrugBank" id="DB01054">
    <property type="generic name" value="Nitrendipine"/>
</dbReference>
<dbReference type="DrugBank" id="DB00252">
    <property type="generic name" value="Phenytoin"/>
</dbReference>
<dbReference type="DrugBank" id="DB00243">
    <property type="generic name" value="Ranolazine"/>
</dbReference>
<dbReference type="DrugBank" id="DB00421">
    <property type="generic name" value="Spironolactone"/>
</dbReference>
<dbReference type="DrugBank" id="DB00273">
    <property type="generic name" value="Topiramate"/>
</dbReference>
<dbReference type="DrugBank" id="DB09089">
    <property type="generic name" value="Trimebutine"/>
</dbReference>
<dbReference type="DrugBank" id="DB00661">
    <property type="generic name" value="Verapamil"/>
</dbReference>
<dbReference type="TCDB" id="8.A.22.1.3">
    <property type="family name" value="the ca(2+) channel auxiliary subunit Beta types 1-4 (cca-Beta) family"/>
</dbReference>
<dbReference type="iPTMnet" id="P54284"/>
<dbReference type="PhosphoSitePlus" id="P54284"/>
<dbReference type="BioMuta" id="CACNB3"/>
<dbReference type="DMDM" id="1705683"/>
<dbReference type="jPOST" id="P54284"/>
<dbReference type="MassIVE" id="P54284"/>
<dbReference type="PaxDb" id="9606-ENSP00000301050"/>
<dbReference type="PeptideAtlas" id="P54284"/>
<dbReference type="ProteomicsDB" id="25153"/>
<dbReference type="ProteomicsDB" id="26032"/>
<dbReference type="ProteomicsDB" id="28606"/>
<dbReference type="ProteomicsDB" id="56673">
    <molecule id="P54284-1"/>
</dbReference>
<dbReference type="ProteomicsDB" id="56674">
    <molecule id="P54284-2"/>
</dbReference>
<dbReference type="Pumba" id="P54284"/>
<dbReference type="Antibodypedia" id="13690">
    <property type="antibodies" value="211 antibodies from 30 providers"/>
</dbReference>
<dbReference type="DNASU" id="784"/>
<dbReference type="Ensembl" id="ENST00000301050.7">
    <molecule id="P54284-1"/>
    <property type="protein sequence ID" value="ENSP00000301050.2"/>
    <property type="gene ID" value="ENSG00000167535.8"/>
</dbReference>
<dbReference type="Ensembl" id="ENST00000536187.6">
    <molecule id="P54284-4"/>
    <property type="protein sequence ID" value="ENSP00000444160.2"/>
    <property type="gene ID" value="ENSG00000167535.8"/>
</dbReference>
<dbReference type="Ensembl" id="ENST00000540990.5">
    <molecule id="P54284-3"/>
    <property type="protein sequence ID" value="ENSP00000445495.1"/>
    <property type="gene ID" value="ENSG00000167535.8"/>
</dbReference>
<dbReference type="Ensembl" id="ENST00000547230.5">
    <molecule id="P54284-5"/>
    <property type="protein sequence ID" value="ENSP00000448304.1"/>
    <property type="gene ID" value="ENSG00000167535.8"/>
</dbReference>
<dbReference type="GeneID" id="784"/>
<dbReference type="KEGG" id="hsa:784"/>
<dbReference type="MANE-Select" id="ENST00000301050.7">
    <property type="protein sequence ID" value="ENSP00000301050.2"/>
    <property type="RefSeq nucleotide sequence ID" value="NM_000725.4"/>
    <property type="RefSeq protein sequence ID" value="NP_000716.2"/>
</dbReference>
<dbReference type="UCSC" id="uc001rsl.3">
    <molecule id="P54284-1"/>
    <property type="organism name" value="human"/>
</dbReference>
<dbReference type="AGR" id="HGNC:1403"/>
<dbReference type="CTD" id="784"/>
<dbReference type="DisGeNET" id="784"/>
<dbReference type="GeneCards" id="CACNB3"/>
<dbReference type="HGNC" id="HGNC:1403">
    <property type="gene designation" value="CACNB3"/>
</dbReference>
<dbReference type="HPA" id="ENSG00000167535">
    <property type="expression patterns" value="Tissue enhanced (brain)"/>
</dbReference>
<dbReference type="MIM" id="601958">
    <property type="type" value="gene"/>
</dbReference>
<dbReference type="neXtProt" id="NX_P54284"/>
<dbReference type="OpenTargets" id="ENSG00000167535"/>
<dbReference type="PharmGKB" id="PA89"/>
<dbReference type="VEuPathDB" id="HostDB:ENSG00000167535"/>
<dbReference type="eggNOG" id="KOG3812">
    <property type="taxonomic scope" value="Eukaryota"/>
</dbReference>
<dbReference type="GeneTree" id="ENSGT00950000182837"/>
<dbReference type="HOGENOM" id="CLU_021995_0_1_1"/>
<dbReference type="InParanoid" id="P54284"/>
<dbReference type="OMA" id="MGEHESE"/>
<dbReference type="OrthoDB" id="5962384at2759"/>
<dbReference type="PAN-GO" id="P54284">
    <property type="GO annotations" value="5 GO annotations based on evolutionary models"/>
</dbReference>
<dbReference type="PhylomeDB" id="P54284"/>
<dbReference type="TreeFam" id="TF316195"/>
<dbReference type="PathwayCommons" id="P54284"/>
<dbReference type="Reactome" id="R-HSA-112308">
    <property type="pathway name" value="Presynaptic depolarization and calcium channel opening"/>
</dbReference>
<dbReference type="Reactome" id="R-HSA-400042">
    <property type="pathway name" value="Adrenaline,noradrenaline inhibits insulin secretion"/>
</dbReference>
<dbReference type="Reactome" id="R-HSA-419037">
    <property type="pathway name" value="NCAM1 interactions"/>
</dbReference>
<dbReference type="Reactome" id="R-HSA-422356">
    <property type="pathway name" value="Regulation of insulin secretion"/>
</dbReference>
<dbReference type="Reactome" id="R-HSA-9856532">
    <property type="pathway name" value="Mechanical load activates signaling by PIEZO1 and integrins in osteocytes"/>
</dbReference>
<dbReference type="SignaLink" id="P54284"/>
<dbReference type="BioGRID-ORCS" id="784">
    <property type="hits" value="228 hits in 1158 CRISPR screens"/>
</dbReference>
<dbReference type="CD-CODE" id="FB4E32DD">
    <property type="entry name" value="Presynaptic clusters and postsynaptic densities"/>
</dbReference>
<dbReference type="ChiTaRS" id="CACNB3">
    <property type="organism name" value="human"/>
</dbReference>
<dbReference type="GeneWiki" id="CACNB3"/>
<dbReference type="GenomeRNAi" id="784"/>
<dbReference type="Pharos" id="P54284">
    <property type="development level" value="Tbio"/>
</dbReference>
<dbReference type="PRO" id="PR:P54284"/>
<dbReference type="Proteomes" id="UP000005640">
    <property type="component" value="Chromosome 12"/>
</dbReference>
<dbReference type="RNAct" id="P54284">
    <property type="molecule type" value="protein"/>
</dbReference>
<dbReference type="Bgee" id="ENSG00000167535">
    <property type="expression patterns" value="Expressed in cortical plate and 174 other cell types or tissues"/>
</dbReference>
<dbReference type="ExpressionAtlas" id="P54284">
    <property type="expression patterns" value="baseline and differential"/>
</dbReference>
<dbReference type="GO" id="GO:0005829">
    <property type="term" value="C:cytosol"/>
    <property type="evidence" value="ECO:0000304"/>
    <property type="project" value="Reactome"/>
</dbReference>
<dbReference type="GO" id="GO:1990454">
    <property type="term" value="C:L-type voltage-gated calcium channel complex"/>
    <property type="evidence" value="ECO:0000250"/>
    <property type="project" value="UniProtKB"/>
</dbReference>
<dbReference type="GO" id="GO:0016020">
    <property type="term" value="C:membrane"/>
    <property type="evidence" value="ECO:0000314"/>
    <property type="project" value="UniProtKB"/>
</dbReference>
<dbReference type="GO" id="GO:0045202">
    <property type="term" value="C:synapse"/>
    <property type="evidence" value="ECO:0007669"/>
    <property type="project" value="GOC"/>
</dbReference>
<dbReference type="GO" id="GO:0005891">
    <property type="term" value="C:voltage-gated calcium channel complex"/>
    <property type="evidence" value="ECO:0000314"/>
    <property type="project" value="UniProtKB"/>
</dbReference>
<dbReference type="GO" id="GO:0005246">
    <property type="term" value="F:calcium channel regulator activity"/>
    <property type="evidence" value="ECO:0000250"/>
    <property type="project" value="UniProtKB"/>
</dbReference>
<dbReference type="GO" id="GO:0008331">
    <property type="term" value="F:high voltage-gated calcium channel activity"/>
    <property type="evidence" value="ECO:0000318"/>
    <property type="project" value="GO_Central"/>
</dbReference>
<dbReference type="GO" id="GO:0005245">
    <property type="term" value="F:voltage-gated calcium channel activity"/>
    <property type="evidence" value="ECO:0000304"/>
    <property type="project" value="ProtInc"/>
</dbReference>
<dbReference type="GO" id="GO:0061577">
    <property type="term" value="P:calcium ion transmembrane transport via high voltage-gated calcium channel"/>
    <property type="evidence" value="ECO:0000250"/>
    <property type="project" value="UniProtKB"/>
</dbReference>
<dbReference type="GO" id="GO:0006816">
    <property type="term" value="P:calcium ion transport"/>
    <property type="evidence" value="ECO:0000314"/>
    <property type="project" value="UniProtKB"/>
</dbReference>
<dbReference type="GO" id="GO:0060402">
    <property type="term" value="P:calcium ion transport into cytosol"/>
    <property type="evidence" value="ECO:0000250"/>
    <property type="project" value="BHF-UCL"/>
</dbReference>
<dbReference type="GO" id="GO:0007268">
    <property type="term" value="P:chemical synaptic transmission"/>
    <property type="evidence" value="ECO:0000318"/>
    <property type="project" value="GO_Central"/>
</dbReference>
<dbReference type="GO" id="GO:1901843">
    <property type="term" value="P:positive regulation of high voltage-gated calcium channel activity"/>
    <property type="evidence" value="ECO:0000250"/>
    <property type="project" value="UniProtKB"/>
</dbReference>
<dbReference type="GO" id="GO:0072659">
    <property type="term" value="P:protein localization to plasma membrane"/>
    <property type="evidence" value="ECO:0000250"/>
    <property type="project" value="BHF-UCL"/>
</dbReference>
<dbReference type="GO" id="GO:0098903">
    <property type="term" value="P:regulation of membrane repolarization during action potential"/>
    <property type="evidence" value="ECO:0000250"/>
    <property type="project" value="BHF-UCL"/>
</dbReference>
<dbReference type="GO" id="GO:0050852">
    <property type="term" value="P:T cell receptor signaling pathway"/>
    <property type="evidence" value="ECO:0007669"/>
    <property type="project" value="Ensembl"/>
</dbReference>
<dbReference type="CDD" id="cd12042">
    <property type="entry name" value="SH3_CACNB3"/>
    <property type="match status" value="1"/>
</dbReference>
<dbReference type="FunFam" id="3.40.50.300:FF:000023">
    <property type="entry name" value="Voltage-dependent L-type calcium channel subunit beta-2"/>
    <property type="match status" value="1"/>
</dbReference>
<dbReference type="FunFam" id="2.30.30.40:FF:000049">
    <property type="entry name" value="Voltage-dependent L-type calcium channel subunit beta-3"/>
    <property type="match status" value="1"/>
</dbReference>
<dbReference type="Gene3D" id="3.40.50.300">
    <property type="entry name" value="P-loop containing nucleotide triphosphate hydrolases"/>
    <property type="match status" value="1"/>
</dbReference>
<dbReference type="Gene3D" id="2.30.30.40">
    <property type="entry name" value="SH3 Domains"/>
    <property type="match status" value="1"/>
</dbReference>
<dbReference type="InterPro" id="IPR046937">
    <property type="entry name" value="CAB1-4_N_A-dom"/>
</dbReference>
<dbReference type="InterPro" id="IPR035760">
    <property type="entry name" value="CACNB3_SH3"/>
</dbReference>
<dbReference type="InterPro" id="IPR008145">
    <property type="entry name" value="GK/Ca_channel_bsu"/>
</dbReference>
<dbReference type="InterPro" id="IPR027417">
    <property type="entry name" value="P-loop_NTPase"/>
</dbReference>
<dbReference type="InterPro" id="IPR036028">
    <property type="entry name" value="SH3-like_dom_sf"/>
</dbReference>
<dbReference type="InterPro" id="IPR001452">
    <property type="entry name" value="SH3_domain"/>
</dbReference>
<dbReference type="InterPro" id="IPR008079">
    <property type="entry name" value="VDCC_L_b3su"/>
</dbReference>
<dbReference type="InterPro" id="IPR000584">
    <property type="entry name" value="VDCC_L_bsu"/>
</dbReference>
<dbReference type="PANTHER" id="PTHR11824">
    <property type="entry name" value="VOLTAGE-DEPENDENT CALCIUM CHANNEL BETA SUBUNIT"/>
    <property type="match status" value="1"/>
</dbReference>
<dbReference type="Pfam" id="PF00625">
    <property type="entry name" value="Guanylate_kin"/>
    <property type="match status" value="1"/>
</dbReference>
<dbReference type="Pfam" id="PF12052">
    <property type="entry name" value="VGCC_beta4Aa_N"/>
    <property type="match status" value="1"/>
</dbReference>
<dbReference type="PRINTS" id="PR01626">
    <property type="entry name" value="LCACHANNELB"/>
</dbReference>
<dbReference type="PRINTS" id="PR01696">
    <property type="entry name" value="LCACHANNELB3"/>
</dbReference>
<dbReference type="SMART" id="SM00072">
    <property type="entry name" value="GuKc"/>
    <property type="match status" value="1"/>
</dbReference>
<dbReference type="SUPFAM" id="SSF52540">
    <property type="entry name" value="P-loop containing nucleoside triphosphate hydrolases"/>
    <property type="match status" value="1"/>
</dbReference>
<dbReference type="SUPFAM" id="SSF50044">
    <property type="entry name" value="SH3-domain"/>
    <property type="match status" value="1"/>
</dbReference>
<dbReference type="PROSITE" id="PS50002">
    <property type="entry name" value="SH3"/>
    <property type="match status" value="1"/>
</dbReference>
<sequence length="484" mass="54532">MYDDSYVPGFEDSEAGSADSYTSRPSLDSDVSLEEDRESARREVESQAQQQLERAKHKPVAFAVRTNVSYCGVLDEECPVQGSGVNFEAKDFLHIKEKYSNDWWIGRLVKEGGDIAFIPSPQRLESIRLKQEQKARRSGNPSSLSDIGNRRSPPPSLAKQKQKQAEHVPPYDVVPSMRPVVLVGPSLKGYEVTDMMQKALFDFLKHRFDGRISITRVTADLSLAKRSVLNNPGKRTIIERSSARSSIAEVQSEIERIFELAKSLQLVVLDADTINHPAQLAKTSLAPIIVFVKVSSPKVLQRLIRSRGKSQMKHLTVQMMAYDKLVQCPPESFDVILDENQLEDACEHLAEYLEVYWRATHHPAPGPGLLGPPSAIPGLQNQQLLGERGEEHSPLERDSLMPSDEASESSRQAWTGSSQRSSRHLEEDYADAYQDLYQPHRQHTSGLPSANGHDPQDRLLAQDSEHNHSDRNWQRNRPWPKDSY</sequence>
<feature type="chain" id="PRO_0000144056" description="Voltage-dependent L-type calcium channel subunit beta-3">
    <location>
        <begin position="1"/>
        <end position="484"/>
    </location>
</feature>
<feature type="domain" description="SH3" evidence="3">
    <location>
        <begin position="59"/>
        <end position="128"/>
    </location>
</feature>
<feature type="region of interest" description="Disordered" evidence="4">
    <location>
        <begin position="1"/>
        <end position="52"/>
    </location>
</feature>
<feature type="region of interest" description="Disordered" evidence="4">
    <location>
        <begin position="129"/>
        <end position="170"/>
    </location>
</feature>
<feature type="region of interest" description="Mediates interaction with the alpha subunit" evidence="1">
    <location>
        <begin position="195"/>
        <end position="345"/>
    </location>
</feature>
<feature type="region of interest" description="Disordered" evidence="4">
    <location>
        <begin position="387"/>
        <end position="484"/>
    </location>
</feature>
<feature type="compositionally biased region" description="Basic and acidic residues" evidence="4">
    <location>
        <begin position="387"/>
        <end position="399"/>
    </location>
</feature>
<feature type="compositionally biased region" description="Polar residues" evidence="4">
    <location>
        <begin position="409"/>
        <end position="420"/>
    </location>
</feature>
<feature type="compositionally biased region" description="Basic and acidic residues" evidence="4">
    <location>
        <begin position="463"/>
        <end position="484"/>
    </location>
</feature>
<feature type="modified residue" description="Phosphoserine" evidence="1">
    <location>
        <position position="152"/>
    </location>
</feature>
<feature type="modified residue" description="Phosphoserine" evidence="1">
    <location>
        <position position="393"/>
    </location>
</feature>
<feature type="splice variant" id="VSP_046708" description="In isoform 3." evidence="10">
    <original>MYDDSYVPGFEDSEA</original>
    <variation>ME</variation>
    <location>
        <begin position="1"/>
        <end position="15"/>
    </location>
</feature>
<feature type="splice variant" id="VSP_046709" description="In isoform 4." evidence="10">
    <original>MYDDSYVPGFEDSEA</original>
    <variation>MSFSDSSATFLLNE</variation>
    <location>
        <begin position="1"/>
        <end position="15"/>
    </location>
</feature>
<feature type="splice variant" id="VSP_046710" description="In isoform 5." evidence="13">
    <location>
        <begin position="57"/>
        <end position="97"/>
    </location>
</feature>
<feature type="splice variant" id="VSP_000634" description="In isoform 2." evidence="12">
    <original>HRQHTSGLPSANGHDPQDRLLAQDSEHNHSDRNWQRNRPWPKDSY</original>
    <variation>QCQLLSLL</variation>
    <location>
        <begin position="440"/>
        <end position="484"/>
    </location>
</feature>
<feature type="sequence variant" id="VAR_024384" description="In dbSNP:rs2229954.">
    <original>R</original>
    <variation>H</variation>
    <location>
        <position position="423"/>
    </location>
</feature>
<feature type="sequence conflict" description="In Ref. 4; AAA19799." evidence="13" ref="4">
    <original>V</original>
    <variation>L</variation>
    <location>
        <position position="7"/>
    </location>
</feature>
<feature type="sequence conflict" description="In Ref. 4; AAA19799." evidence="13" ref="4">
    <location>
        <position position="32"/>
    </location>
</feature>
<feature type="sequence conflict" description="In Ref. 4; AAA19799." evidence="13" ref="4">
    <original>V</original>
    <variation>E</variation>
    <location>
        <position position="60"/>
    </location>
</feature>
<feature type="sequence conflict" description="In Ref. 5; BAH14694." evidence="13" ref="5">
    <original>N</original>
    <variation>D</variation>
    <location>
        <position position="101"/>
    </location>
</feature>
<feature type="sequence conflict" description="In Ref. 5; BAH14209." evidence="13" ref="5">
    <original>Q</original>
    <variation>R</variation>
    <location>
        <position position="162"/>
    </location>
</feature>
<feature type="sequence conflict" description="In Ref. 5; BAH12637." evidence="13" ref="5">
    <original>M</original>
    <variation>T</variation>
    <location>
        <position position="196"/>
    </location>
</feature>
<feature type="sequence conflict" description="In Ref. 5; BAH12637." evidence="13" ref="5">
    <original>S</original>
    <variation>P</variation>
    <location>
        <position position="245"/>
    </location>
</feature>
<feature type="sequence conflict" description="In Ref. 4; AAA19799." evidence="13" ref="4">
    <location>
        <position position="320"/>
    </location>
</feature>
<feature type="sequence conflict" description="In Ref. 4; AAA19799." evidence="13" ref="4">
    <original>H</original>
    <variation>L</variation>
    <location>
        <position position="348"/>
    </location>
</feature>
<feature type="sequence conflict" description="In Ref. 4; AAA19799." evidence="13" ref="4">
    <original>S</original>
    <variation>T</variation>
    <location>
        <position position="421"/>
    </location>
</feature>
<feature type="helix" evidence="15">
    <location>
        <begin position="39"/>
        <end position="45"/>
    </location>
</feature>
<feature type="helix" evidence="15">
    <location>
        <begin position="47"/>
        <end position="51"/>
    </location>
</feature>
<feature type="turn" evidence="15">
    <location>
        <begin position="52"/>
        <end position="57"/>
    </location>
</feature>
<feature type="strand" evidence="17">
    <location>
        <begin position="63"/>
        <end position="66"/>
    </location>
</feature>
<feature type="strand" evidence="15">
    <location>
        <begin position="72"/>
        <end position="74"/>
    </location>
</feature>
<feature type="strand" evidence="17">
    <location>
        <begin position="79"/>
        <end position="82"/>
    </location>
</feature>
<feature type="strand" evidence="17">
    <location>
        <begin position="91"/>
        <end position="97"/>
    </location>
</feature>
<feature type="strand" evidence="15">
    <location>
        <begin position="101"/>
        <end position="107"/>
    </location>
</feature>
<feature type="strand" evidence="15">
    <location>
        <begin position="110"/>
        <end position="112"/>
    </location>
</feature>
<feature type="strand" evidence="15">
    <location>
        <begin position="115"/>
        <end position="119"/>
    </location>
</feature>
<feature type="helix" evidence="15">
    <location>
        <begin position="121"/>
        <end position="127"/>
    </location>
</feature>
<feature type="helix" evidence="15">
    <location>
        <begin position="130"/>
        <end position="132"/>
    </location>
</feature>
<feature type="strand" evidence="18">
    <location>
        <begin position="134"/>
        <end position="136"/>
    </location>
</feature>
<feature type="strand" evidence="17">
    <location>
        <begin position="138"/>
        <end position="140"/>
    </location>
</feature>
<feature type="strand" evidence="15">
    <location>
        <begin position="148"/>
        <end position="150"/>
    </location>
</feature>
<feature type="turn" evidence="15">
    <location>
        <begin position="156"/>
        <end position="162"/>
    </location>
</feature>
<feature type="turn" evidence="17">
    <location>
        <begin position="164"/>
        <end position="166"/>
    </location>
</feature>
<feature type="strand" evidence="15">
    <location>
        <begin position="170"/>
        <end position="172"/>
    </location>
</feature>
<feature type="strand" evidence="15">
    <location>
        <begin position="180"/>
        <end position="183"/>
    </location>
</feature>
<feature type="strand" evidence="15">
    <location>
        <begin position="185"/>
        <end position="187"/>
    </location>
</feature>
<feature type="strand" evidence="14">
    <location>
        <begin position="188"/>
        <end position="190"/>
    </location>
</feature>
<feature type="helix" evidence="15">
    <location>
        <begin position="192"/>
        <end position="198"/>
    </location>
</feature>
<feature type="helix" evidence="15">
    <location>
        <begin position="200"/>
        <end position="207"/>
    </location>
</feature>
<feature type="strand" evidence="15">
    <location>
        <begin position="209"/>
        <end position="211"/>
    </location>
</feature>
<feature type="strand" evidence="18">
    <location>
        <begin position="212"/>
        <end position="215"/>
    </location>
</feature>
<feature type="strand" evidence="18">
    <location>
        <begin position="226"/>
        <end position="228"/>
    </location>
</feature>
<feature type="strand" evidence="15">
    <location>
        <begin position="236"/>
        <end position="238"/>
    </location>
</feature>
<feature type="turn" evidence="17">
    <location>
        <begin position="241"/>
        <end position="243"/>
    </location>
</feature>
<feature type="strand" evidence="17">
    <location>
        <begin position="244"/>
        <end position="246"/>
    </location>
</feature>
<feature type="helix" evidence="15">
    <location>
        <begin position="247"/>
        <end position="250"/>
    </location>
</feature>
<feature type="turn" evidence="15">
    <location>
        <begin position="252"/>
        <end position="256"/>
    </location>
</feature>
<feature type="helix" evidence="15">
    <location>
        <begin position="258"/>
        <end position="263"/>
    </location>
</feature>
<feature type="strand" evidence="18">
    <location>
        <begin position="266"/>
        <end position="269"/>
    </location>
</feature>
<feature type="turn" evidence="17">
    <location>
        <begin position="277"/>
        <end position="280"/>
    </location>
</feature>
<feature type="strand" evidence="15">
    <location>
        <begin position="282"/>
        <end position="284"/>
    </location>
</feature>
<feature type="strand" evidence="15">
    <location>
        <begin position="288"/>
        <end position="291"/>
    </location>
</feature>
<feature type="helix" evidence="15">
    <location>
        <begin position="299"/>
        <end position="305"/>
    </location>
</feature>
<feature type="strand" evidence="16">
    <location>
        <begin position="306"/>
        <end position="309"/>
    </location>
</feature>
<feature type="helix" evidence="15">
    <location>
        <begin position="311"/>
        <end position="313"/>
    </location>
</feature>
<feature type="helix" evidence="15">
    <location>
        <begin position="316"/>
        <end position="320"/>
    </location>
</feature>
<feature type="helix" evidence="15">
    <location>
        <begin position="323"/>
        <end position="326"/>
    </location>
</feature>
<feature type="helix" evidence="18">
    <location>
        <begin position="330"/>
        <end position="332"/>
    </location>
</feature>
<feature type="strand" evidence="17">
    <location>
        <begin position="334"/>
        <end position="336"/>
    </location>
</feature>
<feature type="helix" evidence="15">
    <location>
        <begin position="342"/>
        <end position="358"/>
    </location>
</feature>
<keyword id="KW-0002">3D-structure</keyword>
<keyword id="KW-0025">Alternative splicing</keyword>
<keyword id="KW-0106">Calcium</keyword>
<keyword id="KW-0107">Calcium channel</keyword>
<keyword id="KW-0109">Calcium transport</keyword>
<keyword id="KW-0963">Cytoplasm</keyword>
<keyword id="KW-0407">Ion channel</keyword>
<keyword id="KW-0406">Ion transport</keyword>
<keyword id="KW-0597">Phosphoprotein</keyword>
<keyword id="KW-1267">Proteomics identification</keyword>
<keyword id="KW-1185">Reference proteome</keyword>
<keyword id="KW-0728">SH3 domain</keyword>
<keyword id="KW-0813">Transport</keyword>
<keyword id="KW-0851">Voltage-gated channel</keyword>
<protein>
    <recommendedName>
        <fullName>Voltage-dependent L-type calcium channel subunit beta-3</fullName>
        <shortName>CAB3</shortName>
    </recommendedName>
    <alternativeName>
        <fullName>Calcium channel voltage-dependent subunit beta 3</fullName>
    </alternativeName>
</protein>
<name>CACB3_HUMAN</name>
<organism>
    <name type="scientific">Homo sapiens</name>
    <name type="common">Human</name>
    <dbReference type="NCBI Taxonomy" id="9606"/>
    <lineage>
        <taxon>Eukaryota</taxon>
        <taxon>Metazoa</taxon>
        <taxon>Chordata</taxon>
        <taxon>Craniata</taxon>
        <taxon>Vertebrata</taxon>
        <taxon>Euteleostomi</taxon>
        <taxon>Mammalia</taxon>
        <taxon>Eutheria</taxon>
        <taxon>Euarchontoglires</taxon>
        <taxon>Primates</taxon>
        <taxon>Haplorrhini</taxon>
        <taxon>Catarrhini</taxon>
        <taxon>Hominidae</taxon>
        <taxon>Homo</taxon>
    </lineage>
</organism>